<evidence type="ECO:0000250" key="1"/>
<evidence type="ECO:0000250" key="2">
    <source>
        <dbReference type="UniProtKB" id="O00206"/>
    </source>
</evidence>
<evidence type="ECO:0000250" key="3">
    <source>
        <dbReference type="UniProtKB" id="Q9QUK6"/>
    </source>
</evidence>
<evidence type="ECO:0000255" key="4"/>
<evidence type="ECO:0000255" key="5">
    <source>
        <dbReference type="PROSITE-ProRule" id="PRU00204"/>
    </source>
</evidence>
<evidence type="ECO:0000305" key="6"/>
<sequence>MMSASRLAGTLIPAMAFLSCVRPESWEPCVEVVPNITYQCMELNFYKIPDNLPFSTKNLDLSFNPLRHLGSYSFFSFPELQVLDLSRCEIQTIEDGAYQSLSHLSTLILTGNPIQSLALGAFSGLSSLQKLVAVETNLASLENFPIGHLKTLKELNVAHNLIQSFKLPEYFSNLTNLEHLDLSSNKIQSIYCTDLRVLHQMPLLNLSLDLSLNPMNFIQPGAFKEIRLHKLTLRNNFDSLNVMKTCIQGLAGLEVHRLVLGEFRNEGNLEKFDKSALEGLCNLTIEEFRLAYLDYYLDDIIDLFNCLTNVSSFSLVSVTIKSVKDFSYNFGWQHLELVNCKFGQFPTLKLKSLKRLTFTSNKGGNAFSEVDLPSLEFLDLSRNGLSFKGCCSQSDFGTTSLKYLDLSFNGVITMSSNFLGLEQLEHLDFQHSNLKQMSEFSVFLSLRNLIYLDISHTHTRVAFNGIFNGLSSLEVLKMAGNSFQENFLPDIFTELRNLTFLDLSQCQLEQLSPTAFNSLSSLQVLNMSHNNFFSLDTFPYKCLNSLQVLDYSLNHIMTSKKQELQHFPSSLAFLNLTQNDFACTCEHQSFLQWIKDQRQLLVEVERMECATPSDKQGMPVLSLNITCQMNKTIIGVSVLSVLVVSVVAVLVYKFYFHLMLLAGCIKYGRGENIYDAFVIYSSQDEDWVRNELVKNLEEGVPPFQLCLHYRDFIPGVAIAANIIHEGFHKSRKVIVVVSQHFIQSRWCIFEYEIAQTWQFLSSRAGIIFIVLQKVEKTLLRRQVELYRLLSRNTYLEWEDSVLGRHIFWRRLRKALLDGKSWNPEGTVGTGCNWQEATSI</sequence>
<protein>
    <recommendedName>
        <fullName>Toll-like receptor 4</fullName>
    </recommendedName>
    <cdAntigenName>CD284</cdAntigenName>
</protein>
<feature type="signal peptide" evidence="4">
    <location>
        <begin position="1"/>
        <end position="23"/>
    </location>
</feature>
<feature type="chain" id="PRO_0000034724" description="Toll-like receptor 4">
    <location>
        <begin position="24"/>
        <end position="839"/>
    </location>
</feature>
<feature type="topological domain" description="Extracellular" evidence="4">
    <location>
        <begin position="24"/>
        <end position="631"/>
    </location>
</feature>
<feature type="transmembrane region" description="Helical" evidence="4">
    <location>
        <begin position="632"/>
        <end position="652"/>
    </location>
</feature>
<feature type="topological domain" description="Cytoplasmic" evidence="4">
    <location>
        <begin position="653"/>
        <end position="839"/>
    </location>
</feature>
<feature type="repeat" description="LRR 1">
    <location>
        <begin position="55"/>
        <end position="76"/>
    </location>
</feature>
<feature type="repeat" description="LRR 2">
    <location>
        <begin position="79"/>
        <end position="100"/>
    </location>
</feature>
<feature type="repeat" description="LRR 3">
    <location>
        <begin position="103"/>
        <end position="124"/>
    </location>
</feature>
<feature type="repeat" description="LRR 4">
    <location>
        <begin position="127"/>
        <end position="148"/>
    </location>
</feature>
<feature type="repeat" description="LRR 5">
    <location>
        <begin position="151"/>
        <end position="172"/>
    </location>
</feature>
<feature type="repeat" description="LRR 6">
    <location>
        <begin position="176"/>
        <end position="199"/>
    </location>
</feature>
<feature type="repeat" description="LRR 7">
    <location>
        <begin position="205"/>
        <end position="225"/>
    </location>
</feature>
<feature type="repeat" description="LRR 8">
    <location>
        <begin position="227"/>
        <end position="247"/>
    </location>
</feature>
<feature type="repeat" description="LRR 9">
    <location>
        <begin position="331"/>
        <end position="351"/>
    </location>
</feature>
<feature type="repeat" description="LRR 10">
    <location>
        <begin position="352"/>
        <end position="373"/>
    </location>
</feature>
<feature type="repeat" description="LRR 11">
    <location>
        <begin position="374"/>
        <end position="394"/>
    </location>
</feature>
<feature type="repeat" description="LRR 12">
    <location>
        <begin position="400"/>
        <end position="422"/>
    </location>
</feature>
<feature type="repeat" description="LRR 13">
    <location>
        <begin position="423"/>
        <end position="444"/>
    </location>
</feature>
<feature type="repeat" description="LRR 14">
    <location>
        <begin position="448"/>
        <end position="456"/>
    </location>
</feature>
<feature type="repeat" description="LRR 15">
    <location>
        <begin position="472"/>
        <end position="495"/>
    </location>
</feature>
<feature type="repeat" description="LRR 16">
    <location>
        <begin position="497"/>
        <end position="518"/>
    </location>
</feature>
<feature type="repeat" description="LRR 17">
    <location>
        <begin position="521"/>
        <end position="542"/>
    </location>
</feature>
<feature type="repeat" description="LRR 18">
    <location>
        <begin position="545"/>
        <end position="565"/>
    </location>
</feature>
<feature type="domain" description="LRRCT">
    <location>
        <begin position="579"/>
        <end position="629"/>
    </location>
</feature>
<feature type="domain" description="TIR" evidence="5">
    <location>
        <begin position="672"/>
        <end position="815"/>
    </location>
</feature>
<feature type="glycosylation site" description="N-linked (GlcNAc...) asparagine" evidence="4">
    <location>
        <position position="35"/>
    </location>
</feature>
<feature type="glycosylation site" description="N-linked (GlcNAc...) asparagine" evidence="4">
    <location>
        <position position="173"/>
    </location>
</feature>
<feature type="glycosylation site" description="N-linked (GlcNAc...) asparagine" evidence="4">
    <location>
        <position position="205"/>
    </location>
</feature>
<feature type="glycosylation site" description="N-linked (GlcNAc...) asparagine" evidence="4">
    <location>
        <position position="282"/>
    </location>
</feature>
<feature type="glycosylation site" description="N-linked (GlcNAc...) asparagine" evidence="4">
    <location>
        <position position="309"/>
    </location>
</feature>
<feature type="glycosylation site" description="N-linked (GlcNAc...) asparagine" evidence="4">
    <location>
        <position position="497"/>
    </location>
</feature>
<feature type="glycosylation site" description="N-linked (GlcNAc...) asparagine" evidence="4">
    <location>
        <position position="526"/>
    </location>
</feature>
<feature type="glycosylation site" description="N-linked (GlcNAc...) asparagine" evidence="4">
    <location>
        <position position="575"/>
    </location>
</feature>
<feature type="glycosylation site" description="N-linked (GlcNAc...) asparagine" evidence="4">
    <location>
        <position position="624"/>
    </location>
</feature>
<feature type="glycosylation site" description="N-linked (GlcNAc...) asparagine" evidence="4">
    <location>
        <position position="630"/>
    </location>
</feature>
<feature type="disulfide bond" evidence="1">
    <location>
        <begin position="29"/>
        <end position="40"/>
    </location>
</feature>
<feature type="disulfide bond" evidence="1">
    <location>
        <begin position="281"/>
        <end position="306"/>
    </location>
</feature>
<feature type="disulfide bond" evidence="1">
    <location>
        <begin position="390"/>
        <end position="391"/>
    </location>
</feature>
<feature type="disulfide bond" evidence="1">
    <location>
        <begin position="583"/>
        <end position="609"/>
    </location>
</feature>
<feature type="disulfide bond" evidence="1">
    <location>
        <begin position="585"/>
        <end position="627"/>
    </location>
</feature>
<comment type="function">
    <text evidence="2">Transmembrane receptor that functions as a pattern recognition receptor recognizing pathogen- and damage-associated molecular patterns (PAMPs and DAMPs) to induce innate immune responses via downstream signaling pathways. At the plasma membrane, cooperates with LY96 to mediate the innate immune response to bacterial lipopolysaccharide (LPS). Also involved in LPS-independent inflammatory responses triggered by free fatty acids, such as palmitate, and Ni(2+). Mechanistically, acts via MYD88, TIRAP and TRAF6, leading to NF-kappa-B activation, cytokine secretion and the inflammatory response. Alternatively, CD14-mediated TLR4 internalization via endocytosis is associated with the initiation of a MYD88-independent signaling via the TICAM1-TBK1-IRF3 axis leading to type I interferon production. In addition to the secretion of proinflammatory cytokines, initiates the activation of NLRP3 inflammasome and formation of a positive feedback loop between autophagy and NF-kappa-B signaling cascade. In complex with TLR6, promotes inflammation in monocytes/macrophages by associating with TLR6 and the receptor CD86. Upon ligand binding, such as oxLDL or amyloid-beta 42, the TLR4:TLR6 complex is internalized and triggers inflammatory response, leading to NF-kappa-B-dependent production of CXCL1, CXCL2 and CCL9 cytokines, via MYD88 signaling pathway, and CCL5 cytokine, via TICAM1 signaling pathway. In myeloid dendritic cells, vesicular stomatitis virus glycoprotein G but not LPS promotes the activation of IRF7, leading to type I IFN production in a CD14-dependent manner.</text>
</comment>
<comment type="subunit">
    <text evidence="2 3">Belongs to the lipopolysaccharide (LPS) receptor, a multi-protein complex containing at least CD14, LY96 and TLR4. Binding to bacterial LPS leads to homodimerization. Interacts with LY96 via the extracellular domain. Interacts with MYD88 and TIRAP via their respective TIR domains. Interacts with NOX4. Interacts with CNPY3 and HSP90B1; this interaction is required for proper folding in the endoplasmic reticulum. Interacts with MAP3K21; this interaction leads to negative regulation of TLR4 signaling. Interacts with CD36, following CD36 stimulation by oxLDL or amyloid-beta 42, and forms a heterodimer with TLR6. The trimeric complex is internalized and triggers inflammatory response. LYN kinase activity facilitates TLR4-TLR6 heterodimerization and signal initiation. Interacts with TICAM1 in response to LPS in a WDFY1-dependent manner. Interacts with WDFY1 in response to LPS. Interacts with SMPDL3B. Interacts with CEACAM1; upon lipopolysaccharide stimulation, forms a complex including TLR4 and the phosphorylated form of SYK and CEACAM1, which in turn, recruits PTPN6 that dephosphorylates SYK, reducing the production of reactive oxygen species (ROS) and lysosome disruption, which in turn, reduces the activity of the inflammasome. Interacts with RFTN1; the interaction occurs in response to lipopolysaccharide stimulation. Interacts with SCIMP; the interaction occurs in response to lipopolysaccharide stimulation and is enhanced by phosphorylation of SCIMP by LYN (By similarity). This interaction facilitates the phosphorylation of TLR4 by LYN which elicits a selective cytokine response in macrophages (By similarity). Interacts with TRAF3IP3 (By similarity). Interacts with TREM1; this interaction enhances TLR4-mediated inflammatory response (By similarity). Interacts with ZG16B/PAUF (By similarity). Interacts with CD82; this interaction inhibits TLR4-mediated signaling pathway (By similarity).</text>
</comment>
<comment type="subcellular location">
    <subcellularLocation>
        <location evidence="2">Cell membrane</location>
        <topology evidence="2">Single-pass type I membrane protein</topology>
    </subcellularLocation>
    <subcellularLocation>
        <location evidence="2">Early endosome</location>
    </subcellularLocation>
    <subcellularLocation>
        <location evidence="3">Cell projection</location>
        <location evidence="3">Ruffle</location>
    </subcellularLocation>
    <text evidence="2">Upon complex formation with CD36 and TLR6, internalized through dynamin-dependent endocytosis. Colocalizes with RFTN1 at cell membrane and then together with RFTN1 moves to endosomes, upon lipopolysaccharide stimulation.</text>
</comment>
<comment type="domain">
    <text evidence="1">The TIR domain mediates interaction with NOX4.</text>
</comment>
<comment type="PTM">
    <text evidence="3">Phosphorylated on tyrosine residues by LYN after binding lipopolysaccharide.</text>
</comment>
<comment type="PTM">
    <text evidence="2">Ubiquitinated by RNF128 via 'Lys-28'-linked polyubiquitin chains, leading to proteasomal degradation.</text>
</comment>
<comment type="similarity">
    <text evidence="6">Belongs to the Toll-like receptor family.</text>
</comment>
<comment type="caution">
    <text evidence="2 6">In some plant proteins and in human SARM1, the TIR domain has NAD(+) hydrolase (NADase) activity (By similarity). However, despite the presence of the catalytic Asp residue, the isolated TIR domain of human TLR4 lacks NADase activity (By similarity). Based on this, it is unlikely that Toll-like receptors have NADase activity.</text>
</comment>
<proteinExistence type="inferred from homology"/>
<accession>Q9TTN0</accession>
<dbReference type="EMBL" id="AF179220">
    <property type="protein sequence ID" value="AAF05320.1"/>
    <property type="molecule type" value="Genomic_DNA"/>
</dbReference>
<dbReference type="EMBL" id="AF179218">
    <property type="protein sequence ID" value="AAF05320.1"/>
    <property type="status" value="JOINED"/>
    <property type="molecule type" value="Genomic_DNA"/>
</dbReference>
<dbReference type="EMBL" id="AF179219">
    <property type="protein sequence ID" value="AAF05320.1"/>
    <property type="status" value="JOINED"/>
    <property type="molecule type" value="Genomic_DNA"/>
</dbReference>
<dbReference type="SMR" id="Q9TTN0"/>
<dbReference type="STRING" id="9597.ENSPPAP00000016171"/>
<dbReference type="GlyCosmos" id="Q9TTN0">
    <property type="glycosylation" value="10 sites, No reported glycans"/>
</dbReference>
<dbReference type="eggNOG" id="KOG4641">
    <property type="taxonomic scope" value="Eukaryota"/>
</dbReference>
<dbReference type="Proteomes" id="UP000240080">
    <property type="component" value="Unplaced"/>
</dbReference>
<dbReference type="GO" id="GO:0005769">
    <property type="term" value="C:early endosome"/>
    <property type="evidence" value="ECO:0007669"/>
    <property type="project" value="UniProtKB-SubCell"/>
</dbReference>
<dbReference type="GO" id="GO:0046696">
    <property type="term" value="C:lipopolysaccharide receptor complex"/>
    <property type="evidence" value="ECO:0000250"/>
    <property type="project" value="UniProtKB"/>
</dbReference>
<dbReference type="GO" id="GO:0005886">
    <property type="term" value="C:plasma membrane"/>
    <property type="evidence" value="ECO:0000250"/>
    <property type="project" value="UniProtKB"/>
</dbReference>
<dbReference type="GO" id="GO:0001726">
    <property type="term" value="C:ruffle"/>
    <property type="evidence" value="ECO:0007669"/>
    <property type="project" value="UniProtKB-SubCell"/>
</dbReference>
<dbReference type="GO" id="GO:0001530">
    <property type="term" value="F:lipopolysaccharide binding"/>
    <property type="evidence" value="ECO:0007669"/>
    <property type="project" value="TreeGrafter"/>
</dbReference>
<dbReference type="GO" id="GO:0001875">
    <property type="term" value="F:lipopolysaccharide immune receptor activity"/>
    <property type="evidence" value="ECO:0000250"/>
    <property type="project" value="UniProtKB"/>
</dbReference>
<dbReference type="GO" id="GO:0061809">
    <property type="term" value="F:NAD+ nucleosidase activity, cyclic ADP-ribose generating"/>
    <property type="evidence" value="ECO:0007669"/>
    <property type="project" value="UniProtKB-EC"/>
</dbReference>
<dbReference type="GO" id="GO:0004888">
    <property type="term" value="F:transmembrane signaling receptor activity"/>
    <property type="evidence" value="ECO:0007669"/>
    <property type="project" value="InterPro"/>
</dbReference>
<dbReference type="GO" id="GO:0050829">
    <property type="term" value="P:defense response to Gram-negative bacterium"/>
    <property type="evidence" value="ECO:0007669"/>
    <property type="project" value="TreeGrafter"/>
</dbReference>
<dbReference type="GO" id="GO:0032497">
    <property type="term" value="P:detection of lipopolysaccharide"/>
    <property type="evidence" value="ECO:0000250"/>
    <property type="project" value="UniProtKB"/>
</dbReference>
<dbReference type="GO" id="GO:0006954">
    <property type="term" value="P:inflammatory response"/>
    <property type="evidence" value="ECO:0007669"/>
    <property type="project" value="UniProtKB-KW"/>
</dbReference>
<dbReference type="GO" id="GO:0045087">
    <property type="term" value="P:innate immune response"/>
    <property type="evidence" value="ECO:0007669"/>
    <property type="project" value="UniProtKB-KW"/>
</dbReference>
<dbReference type="GO" id="GO:0042116">
    <property type="term" value="P:macrophage activation"/>
    <property type="evidence" value="ECO:0000250"/>
    <property type="project" value="UniProtKB"/>
</dbReference>
<dbReference type="GO" id="GO:0002755">
    <property type="term" value="P:MyD88-dependent toll-like receptor signaling pathway"/>
    <property type="evidence" value="ECO:0007669"/>
    <property type="project" value="TreeGrafter"/>
</dbReference>
<dbReference type="GO" id="GO:0032731">
    <property type="term" value="P:positive regulation of interleukin-1 beta production"/>
    <property type="evidence" value="ECO:0000250"/>
    <property type="project" value="UniProtKB"/>
</dbReference>
<dbReference type="GO" id="GO:1900227">
    <property type="term" value="P:positive regulation of NLRP3 inflammasome complex assembly"/>
    <property type="evidence" value="ECO:0000250"/>
    <property type="project" value="UniProtKB"/>
</dbReference>
<dbReference type="GO" id="GO:0034142">
    <property type="term" value="P:toll-like receptor 4 signaling pathway"/>
    <property type="evidence" value="ECO:0007669"/>
    <property type="project" value="TreeGrafter"/>
</dbReference>
<dbReference type="FunFam" id="3.40.50.10140:FF:000006">
    <property type="entry name" value="Toll-like receptor 4"/>
    <property type="match status" value="1"/>
</dbReference>
<dbReference type="FunFam" id="3.80.10.10:FF:000195">
    <property type="entry name" value="Toll-like receptor 4"/>
    <property type="match status" value="1"/>
</dbReference>
<dbReference type="Gene3D" id="3.80.10.10">
    <property type="entry name" value="Ribonuclease Inhibitor"/>
    <property type="match status" value="1"/>
</dbReference>
<dbReference type="Gene3D" id="3.40.50.10140">
    <property type="entry name" value="Toll/interleukin-1 receptor homology (TIR) domain"/>
    <property type="match status" value="1"/>
</dbReference>
<dbReference type="InterPro" id="IPR000483">
    <property type="entry name" value="Cys-rich_flank_reg_C"/>
</dbReference>
<dbReference type="InterPro" id="IPR001611">
    <property type="entry name" value="Leu-rich_rpt"/>
</dbReference>
<dbReference type="InterPro" id="IPR025875">
    <property type="entry name" value="Leu-rich_rpt_4"/>
</dbReference>
<dbReference type="InterPro" id="IPR003591">
    <property type="entry name" value="Leu-rich_rpt_typical-subtyp"/>
</dbReference>
<dbReference type="InterPro" id="IPR032675">
    <property type="entry name" value="LRR_dom_sf"/>
</dbReference>
<dbReference type="InterPro" id="IPR000157">
    <property type="entry name" value="TIR_dom"/>
</dbReference>
<dbReference type="InterPro" id="IPR017241">
    <property type="entry name" value="Toll-like_receptor"/>
</dbReference>
<dbReference type="InterPro" id="IPR035897">
    <property type="entry name" value="Toll_tir_struct_dom_sf"/>
</dbReference>
<dbReference type="PANTHER" id="PTHR24365">
    <property type="entry name" value="TOLL-LIKE RECEPTOR"/>
    <property type="match status" value="1"/>
</dbReference>
<dbReference type="PANTHER" id="PTHR24365:SF521">
    <property type="entry name" value="TOLL-LIKE RECEPTOR 4"/>
    <property type="match status" value="1"/>
</dbReference>
<dbReference type="Pfam" id="PF12799">
    <property type="entry name" value="LRR_4"/>
    <property type="match status" value="1"/>
</dbReference>
<dbReference type="Pfam" id="PF13516">
    <property type="entry name" value="LRR_6"/>
    <property type="match status" value="1"/>
</dbReference>
<dbReference type="Pfam" id="PF13855">
    <property type="entry name" value="LRR_8"/>
    <property type="match status" value="2"/>
</dbReference>
<dbReference type="Pfam" id="PF01582">
    <property type="entry name" value="TIR"/>
    <property type="match status" value="1"/>
</dbReference>
<dbReference type="PIRSF" id="PIRSF037595">
    <property type="entry name" value="Toll-like_receptor"/>
    <property type="match status" value="1"/>
</dbReference>
<dbReference type="PRINTS" id="PR00019">
    <property type="entry name" value="LEURICHRPT"/>
</dbReference>
<dbReference type="SMART" id="SM00365">
    <property type="entry name" value="LRR_SD22"/>
    <property type="match status" value="5"/>
</dbReference>
<dbReference type="SMART" id="SM00369">
    <property type="entry name" value="LRR_TYP"/>
    <property type="match status" value="11"/>
</dbReference>
<dbReference type="SMART" id="SM00082">
    <property type="entry name" value="LRRCT"/>
    <property type="match status" value="1"/>
</dbReference>
<dbReference type="SMART" id="SM00255">
    <property type="entry name" value="TIR"/>
    <property type="match status" value="1"/>
</dbReference>
<dbReference type="SUPFAM" id="SSF52058">
    <property type="entry name" value="L domain-like"/>
    <property type="match status" value="2"/>
</dbReference>
<dbReference type="SUPFAM" id="SSF52200">
    <property type="entry name" value="Toll/Interleukin receptor TIR domain"/>
    <property type="match status" value="1"/>
</dbReference>
<dbReference type="PROSITE" id="PS51450">
    <property type="entry name" value="LRR"/>
    <property type="match status" value="11"/>
</dbReference>
<dbReference type="PROSITE" id="PS50104">
    <property type="entry name" value="TIR"/>
    <property type="match status" value="1"/>
</dbReference>
<name>TLR4_PANPA</name>
<keyword id="KW-1003">Cell membrane</keyword>
<keyword id="KW-0966">Cell projection</keyword>
<keyword id="KW-1015">Disulfide bond</keyword>
<keyword id="KW-0967">Endosome</keyword>
<keyword id="KW-0325">Glycoprotein</keyword>
<keyword id="KW-0391">Immunity</keyword>
<keyword id="KW-0395">Inflammatory response</keyword>
<keyword id="KW-0399">Innate immunity</keyword>
<keyword id="KW-0433">Leucine-rich repeat</keyword>
<keyword id="KW-0472">Membrane</keyword>
<keyword id="KW-0520">NAD</keyword>
<keyword id="KW-0675">Receptor</keyword>
<keyword id="KW-1185">Reference proteome</keyword>
<keyword id="KW-0677">Repeat</keyword>
<keyword id="KW-0732">Signal</keyword>
<keyword id="KW-0812">Transmembrane</keyword>
<keyword id="KW-1133">Transmembrane helix</keyword>
<keyword id="KW-0832">Ubl conjugation</keyword>
<organism>
    <name type="scientific">Pan paniscus</name>
    <name type="common">Pygmy chimpanzee</name>
    <name type="synonym">Bonobo</name>
    <dbReference type="NCBI Taxonomy" id="9597"/>
    <lineage>
        <taxon>Eukaryota</taxon>
        <taxon>Metazoa</taxon>
        <taxon>Chordata</taxon>
        <taxon>Craniata</taxon>
        <taxon>Vertebrata</taxon>
        <taxon>Euteleostomi</taxon>
        <taxon>Mammalia</taxon>
        <taxon>Eutheria</taxon>
        <taxon>Euarchontoglires</taxon>
        <taxon>Primates</taxon>
        <taxon>Haplorrhini</taxon>
        <taxon>Catarrhini</taxon>
        <taxon>Hominidae</taxon>
        <taxon>Pan</taxon>
    </lineage>
</organism>
<reference key="1">
    <citation type="journal article" date="2000" name="Genome Biol.">
        <title>Phylogenetic variation and polymorphism at the Toll-like receptor 4 locus (TLR4).</title>
        <authorList>
            <person name="Smirnova I."/>
            <person name="Poltorak A."/>
            <person name="Chan E.K.L."/>
            <person name="McBride C."/>
            <person name="Beutler B."/>
        </authorList>
    </citation>
    <scope>NUCLEOTIDE SEQUENCE [GENOMIC DNA]</scope>
</reference>
<gene>
    <name type="primary">TLR4</name>
</gene>